<keyword id="KW-0997">Cell inner membrane</keyword>
<keyword id="KW-1003">Cell membrane</keyword>
<keyword id="KW-0201">Cytochrome c-type biogenesis</keyword>
<keyword id="KW-0472">Membrane</keyword>
<keyword id="KW-1185">Reference proteome</keyword>
<keyword id="KW-0812">Transmembrane</keyword>
<keyword id="KW-1133">Transmembrane helix</keyword>
<sequence length="369" mass="39727">MTLWFVFALMTVAAIFAVLWPLGRSARAQNQGSEVVVYKDQLTEIERDLASGLIAAPEAEAARVEISRRLLAAAGSEPVSEPKSSLKWRRAAAVLALVGLPLVAIGVYMPLGSPRLQDFPLAQRERGSGSGMAGSLENLVVQVEQHLEKNPTDGRGWNVLAPVLERLGRFDDAVRAYRNSITYNGESPERRSDLGEAISAAAGGVVTAEAKTEFERAHALNADDPKANYFLGLAAEQDGRKDDAATIWRALLAKAPADAPWRPLVQSSLVRVGGGTMPALSDETIAASKDMSEGDRGAMVRGMVERLATRLKQNSDDVEGWLRLVRAYLVMGDRDKAVGASSDARQAVAKDTERLRQLNEGLKTLGLDG</sequence>
<evidence type="ECO:0000255" key="1"/>
<evidence type="ECO:0000305" key="2"/>
<comment type="function">
    <text>Required for the biogenesis of c-type cytochromes. Possible subunit of a heme lyase.</text>
</comment>
<comment type="subcellular location">
    <subcellularLocation>
        <location evidence="2">Cell inner membrane</location>
        <topology evidence="2">Multi-pass membrane protein</topology>
        <orientation evidence="2">Periplasmic side</orientation>
    </subcellularLocation>
</comment>
<gene>
    <name type="primary">cycH</name>
    <name type="ordered locus">blr3125</name>
</gene>
<organism>
    <name type="scientific">Bradyrhizobium diazoefficiens (strain JCM 10833 / BCRC 13528 / IAM 13628 / NBRC 14792 / USDA 110)</name>
    <dbReference type="NCBI Taxonomy" id="224911"/>
    <lineage>
        <taxon>Bacteria</taxon>
        <taxon>Pseudomonadati</taxon>
        <taxon>Pseudomonadota</taxon>
        <taxon>Alphaproteobacteria</taxon>
        <taxon>Hyphomicrobiales</taxon>
        <taxon>Nitrobacteraceae</taxon>
        <taxon>Bradyrhizobium</taxon>
    </lineage>
</organism>
<dbReference type="EMBL" id="Z22517">
    <property type="protein sequence ID" value="CAA80242.1"/>
    <property type="molecule type" value="Genomic_DNA"/>
</dbReference>
<dbReference type="EMBL" id="Z46607">
    <property type="protein sequence ID" value="CAA86573.1"/>
    <property type="molecule type" value="Genomic_DNA"/>
</dbReference>
<dbReference type="EMBL" id="BA000040">
    <property type="protein sequence ID" value="BAC48390.1"/>
    <property type="molecule type" value="Genomic_DNA"/>
</dbReference>
<dbReference type="PIR" id="S37314">
    <property type="entry name" value="S37314"/>
</dbReference>
<dbReference type="RefSeq" id="NP_769765.1">
    <property type="nucleotide sequence ID" value="NC_004463.1"/>
</dbReference>
<dbReference type="RefSeq" id="WP_011085909.1">
    <property type="nucleotide sequence ID" value="NC_004463.1"/>
</dbReference>
<dbReference type="SMR" id="P45399"/>
<dbReference type="STRING" id="224911.AAV28_12650"/>
<dbReference type="EnsemblBacteria" id="BAC48390">
    <property type="protein sequence ID" value="BAC48390"/>
    <property type="gene ID" value="BAC48390"/>
</dbReference>
<dbReference type="GeneID" id="46490163"/>
<dbReference type="KEGG" id="bja:blr3125"/>
<dbReference type="PATRIC" id="fig|224911.44.peg.2758"/>
<dbReference type="eggNOG" id="COG4235">
    <property type="taxonomic scope" value="Bacteria"/>
</dbReference>
<dbReference type="HOGENOM" id="CLU_036074_4_1_5"/>
<dbReference type="InParanoid" id="P45399"/>
<dbReference type="OrthoDB" id="9815847at2"/>
<dbReference type="PhylomeDB" id="P45399"/>
<dbReference type="Proteomes" id="UP000002526">
    <property type="component" value="Chromosome"/>
</dbReference>
<dbReference type="GO" id="GO:0005886">
    <property type="term" value="C:plasma membrane"/>
    <property type="evidence" value="ECO:0007669"/>
    <property type="project" value="UniProtKB-SubCell"/>
</dbReference>
<dbReference type="GO" id="GO:0017004">
    <property type="term" value="P:cytochrome complex assembly"/>
    <property type="evidence" value="ECO:0007669"/>
    <property type="project" value="UniProtKB-KW"/>
</dbReference>
<dbReference type="Gene3D" id="1.25.40.10">
    <property type="entry name" value="Tetratricopeptide repeat domain"/>
    <property type="match status" value="2"/>
</dbReference>
<dbReference type="InterPro" id="IPR051263">
    <property type="entry name" value="C-type_cytochrome_biogenesis"/>
</dbReference>
<dbReference type="InterPro" id="IPR017560">
    <property type="entry name" value="Cyt_c_biogenesis_CcmI"/>
</dbReference>
<dbReference type="InterPro" id="IPR011990">
    <property type="entry name" value="TPR-like_helical_dom_sf"/>
</dbReference>
<dbReference type="InterPro" id="IPR019734">
    <property type="entry name" value="TPR_rpt"/>
</dbReference>
<dbReference type="NCBIfam" id="TIGR03142">
    <property type="entry name" value="cytochro_ccmI"/>
    <property type="match status" value="1"/>
</dbReference>
<dbReference type="PANTHER" id="PTHR47870">
    <property type="entry name" value="CYTOCHROME C-TYPE BIOGENESIS PROTEIN CCMH"/>
    <property type="match status" value="1"/>
</dbReference>
<dbReference type="PANTHER" id="PTHR47870:SF4">
    <property type="entry name" value="CYTOCHROME C-TYPE BIOGENESIS PROTEIN CYCH"/>
    <property type="match status" value="1"/>
</dbReference>
<dbReference type="SMART" id="SM00028">
    <property type="entry name" value="TPR"/>
    <property type="match status" value="2"/>
</dbReference>
<dbReference type="SUPFAM" id="SSF48452">
    <property type="entry name" value="TPR-like"/>
    <property type="match status" value="1"/>
</dbReference>
<dbReference type="PROSITE" id="PS50293">
    <property type="entry name" value="TPR_REGION"/>
    <property type="match status" value="1"/>
</dbReference>
<reference key="1">
    <citation type="journal article" date="1993" name="Mol. Microbiol.">
        <title>Formation of several bacterial c-type cytochromes requires a novel membrane-anchored protein that faces the periplasm.</title>
        <authorList>
            <person name="Ritz D."/>
            <person name="Bott M."/>
            <person name="Hennecke H."/>
        </authorList>
    </citation>
    <scope>NUCLEOTIDE SEQUENCE [GENOMIC DNA]</scope>
    <source>
        <strain>USDA 110spc4</strain>
    </source>
</reference>
<reference key="2">
    <citation type="journal article" date="2002" name="DNA Res.">
        <title>Complete genomic sequence of nitrogen-fixing symbiotic bacterium Bradyrhizobium japonicum USDA110.</title>
        <authorList>
            <person name="Kaneko T."/>
            <person name="Nakamura Y."/>
            <person name="Sato S."/>
            <person name="Minamisawa K."/>
            <person name="Uchiumi T."/>
            <person name="Sasamoto S."/>
            <person name="Watanabe A."/>
            <person name="Idesawa K."/>
            <person name="Iriguchi M."/>
            <person name="Kawashima K."/>
            <person name="Kohara M."/>
            <person name="Matsumoto M."/>
            <person name="Shimpo S."/>
            <person name="Tsuruoka H."/>
            <person name="Wada T."/>
            <person name="Yamada M."/>
            <person name="Tabata S."/>
        </authorList>
    </citation>
    <scope>NUCLEOTIDE SEQUENCE [LARGE SCALE GENOMIC DNA]</scope>
    <source>
        <strain>JCM 10833 / BCRC 13528 / IAM 13628 / NBRC 14792 / USDA 110</strain>
    </source>
</reference>
<proteinExistence type="predicted"/>
<name>CYCH_BRADU</name>
<accession>P45399</accession>
<feature type="chain" id="PRO_0000201572" description="Cytochrome c-type biogenesis protein CycH">
    <location>
        <begin position="1"/>
        <end position="369"/>
    </location>
</feature>
<feature type="transmembrane region" description="Helical" evidence="1">
    <location>
        <begin position="7"/>
        <end position="23"/>
    </location>
</feature>
<feature type="transmembrane region" description="Helical" evidence="1">
    <location>
        <begin position="91"/>
        <end position="111"/>
    </location>
</feature>
<feature type="topological domain" description="Periplasmic" evidence="1">
    <location>
        <begin position="112"/>
        <end position="369"/>
    </location>
</feature>
<protein>
    <recommendedName>
        <fullName>Cytochrome c-type biogenesis protein CycH</fullName>
    </recommendedName>
</protein>